<evidence type="ECO:0000255" key="1">
    <source>
        <dbReference type="HAMAP-Rule" id="MF_00156"/>
    </source>
</evidence>
<dbReference type="EC" id="2.1.2.11" evidence="1"/>
<dbReference type="EMBL" id="AJ965256">
    <property type="protein sequence ID" value="CAI82935.1"/>
    <property type="molecule type" value="Genomic_DNA"/>
</dbReference>
<dbReference type="RefSeq" id="WP_011309286.1">
    <property type="nucleotide sequence ID" value="NC_007356.1"/>
</dbReference>
<dbReference type="SMR" id="Q3ZXG0"/>
<dbReference type="KEGG" id="deh:cbdbA781"/>
<dbReference type="HOGENOM" id="CLU_036645_1_0_0"/>
<dbReference type="UniPathway" id="UPA00028">
    <property type="reaction ID" value="UER00003"/>
</dbReference>
<dbReference type="Proteomes" id="UP000000433">
    <property type="component" value="Chromosome"/>
</dbReference>
<dbReference type="GO" id="GO:0005737">
    <property type="term" value="C:cytoplasm"/>
    <property type="evidence" value="ECO:0007669"/>
    <property type="project" value="UniProtKB-SubCell"/>
</dbReference>
<dbReference type="GO" id="GO:0003864">
    <property type="term" value="F:3-methyl-2-oxobutanoate hydroxymethyltransferase activity"/>
    <property type="evidence" value="ECO:0007669"/>
    <property type="project" value="UniProtKB-UniRule"/>
</dbReference>
<dbReference type="GO" id="GO:0000287">
    <property type="term" value="F:magnesium ion binding"/>
    <property type="evidence" value="ECO:0007669"/>
    <property type="project" value="TreeGrafter"/>
</dbReference>
<dbReference type="GO" id="GO:0015940">
    <property type="term" value="P:pantothenate biosynthetic process"/>
    <property type="evidence" value="ECO:0007669"/>
    <property type="project" value="UniProtKB-UniRule"/>
</dbReference>
<dbReference type="CDD" id="cd06557">
    <property type="entry name" value="KPHMT-like"/>
    <property type="match status" value="1"/>
</dbReference>
<dbReference type="FunFam" id="3.20.20.60:FF:000003">
    <property type="entry name" value="3-methyl-2-oxobutanoate hydroxymethyltransferase"/>
    <property type="match status" value="1"/>
</dbReference>
<dbReference type="Gene3D" id="3.20.20.60">
    <property type="entry name" value="Phosphoenolpyruvate-binding domains"/>
    <property type="match status" value="1"/>
</dbReference>
<dbReference type="HAMAP" id="MF_00156">
    <property type="entry name" value="PanB"/>
    <property type="match status" value="1"/>
</dbReference>
<dbReference type="InterPro" id="IPR003700">
    <property type="entry name" value="Pantoate_hydroxy_MeTrfase"/>
</dbReference>
<dbReference type="InterPro" id="IPR015813">
    <property type="entry name" value="Pyrv/PenolPyrv_kinase-like_dom"/>
</dbReference>
<dbReference type="InterPro" id="IPR040442">
    <property type="entry name" value="Pyrv_kinase-like_dom_sf"/>
</dbReference>
<dbReference type="NCBIfam" id="TIGR00222">
    <property type="entry name" value="panB"/>
    <property type="match status" value="1"/>
</dbReference>
<dbReference type="NCBIfam" id="NF001452">
    <property type="entry name" value="PRK00311.1"/>
    <property type="match status" value="1"/>
</dbReference>
<dbReference type="PANTHER" id="PTHR20881">
    <property type="entry name" value="3-METHYL-2-OXOBUTANOATE HYDROXYMETHYLTRANSFERASE"/>
    <property type="match status" value="1"/>
</dbReference>
<dbReference type="PANTHER" id="PTHR20881:SF0">
    <property type="entry name" value="3-METHYL-2-OXOBUTANOATE HYDROXYMETHYLTRANSFERASE"/>
    <property type="match status" value="1"/>
</dbReference>
<dbReference type="Pfam" id="PF02548">
    <property type="entry name" value="Pantoate_transf"/>
    <property type="match status" value="1"/>
</dbReference>
<dbReference type="PIRSF" id="PIRSF000388">
    <property type="entry name" value="Pantoate_hydroxy_MeTrfase"/>
    <property type="match status" value="1"/>
</dbReference>
<dbReference type="SUPFAM" id="SSF51621">
    <property type="entry name" value="Phosphoenolpyruvate/pyruvate domain"/>
    <property type="match status" value="1"/>
</dbReference>
<accession>Q3ZXG0</accession>
<gene>
    <name evidence="1" type="primary">panB</name>
    <name type="ordered locus">cbdbA781</name>
</gene>
<sequence>MRTTISQLKEMKQNKQKIAILTAYDYPTAQILDKAGIPAILVGDSLGMVVLGYDSTVSVTMEDMLHHLKAVVRGSQKALIIADMPFMTYHLSPEQALLNAGRFIQEGGAQAVKLEGGVNVADKVKRIVDCGIPVMGHIGLTPQSVNQLSGFKVQGKTLATALSLIEDAKALEKAGAFAIVLETMPAELAAIITAGISIPTIGIGAGEECDGQVQVISDMLGMFTDFVPKHTKRYADLNGSITKAVSEYAAEVTKGAFPTLKESFTLDKKVLEELKKCVL</sequence>
<name>PANB_DEHMC</name>
<feature type="chain" id="PRO_0000297257" description="3-methyl-2-oxobutanoate hydroxymethyltransferase">
    <location>
        <begin position="1"/>
        <end position="279"/>
    </location>
</feature>
<feature type="active site" description="Proton acceptor" evidence="1">
    <location>
        <position position="182"/>
    </location>
</feature>
<feature type="binding site" evidence="1">
    <location>
        <begin position="44"/>
        <end position="45"/>
    </location>
    <ligand>
        <name>3-methyl-2-oxobutanoate</name>
        <dbReference type="ChEBI" id="CHEBI:11851"/>
    </ligand>
</feature>
<feature type="binding site" evidence="1">
    <location>
        <position position="44"/>
    </location>
    <ligand>
        <name>Mg(2+)</name>
        <dbReference type="ChEBI" id="CHEBI:18420"/>
    </ligand>
</feature>
<feature type="binding site" evidence="1">
    <location>
        <position position="83"/>
    </location>
    <ligand>
        <name>3-methyl-2-oxobutanoate</name>
        <dbReference type="ChEBI" id="CHEBI:11851"/>
    </ligand>
</feature>
<feature type="binding site" evidence="1">
    <location>
        <position position="83"/>
    </location>
    <ligand>
        <name>Mg(2+)</name>
        <dbReference type="ChEBI" id="CHEBI:18420"/>
    </ligand>
</feature>
<feature type="binding site" evidence="1">
    <location>
        <position position="113"/>
    </location>
    <ligand>
        <name>3-methyl-2-oxobutanoate</name>
        <dbReference type="ChEBI" id="CHEBI:11851"/>
    </ligand>
</feature>
<feature type="binding site" evidence="1">
    <location>
        <position position="115"/>
    </location>
    <ligand>
        <name>Mg(2+)</name>
        <dbReference type="ChEBI" id="CHEBI:18420"/>
    </ligand>
</feature>
<organism>
    <name type="scientific">Dehalococcoides mccartyi (strain CBDB1)</name>
    <dbReference type="NCBI Taxonomy" id="255470"/>
    <lineage>
        <taxon>Bacteria</taxon>
        <taxon>Bacillati</taxon>
        <taxon>Chloroflexota</taxon>
        <taxon>Dehalococcoidia</taxon>
        <taxon>Dehalococcoidales</taxon>
        <taxon>Dehalococcoidaceae</taxon>
        <taxon>Dehalococcoides</taxon>
    </lineage>
</organism>
<comment type="function">
    <text evidence="1">Catalyzes the reversible reaction in which hydroxymethyl group from 5,10-methylenetetrahydrofolate is transferred onto alpha-ketoisovalerate to form ketopantoate.</text>
</comment>
<comment type="catalytic activity">
    <reaction evidence="1">
        <text>3-methyl-2-oxobutanoate + (6R)-5,10-methylene-5,6,7,8-tetrahydrofolate + H2O = 2-dehydropantoate + (6S)-5,6,7,8-tetrahydrofolate</text>
        <dbReference type="Rhea" id="RHEA:11824"/>
        <dbReference type="ChEBI" id="CHEBI:11561"/>
        <dbReference type="ChEBI" id="CHEBI:11851"/>
        <dbReference type="ChEBI" id="CHEBI:15377"/>
        <dbReference type="ChEBI" id="CHEBI:15636"/>
        <dbReference type="ChEBI" id="CHEBI:57453"/>
        <dbReference type="EC" id="2.1.2.11"/>
    </reaction>
</comment>
<comment type="cofactor">
    <cofactor evidence="1">
        <name>Mg(2+)</name>
        <dbReference type="ChEBI" id="CHEBI:18420"/>
    </cofactor>
    <text evidence="1">Binds 1 Mg(2+) ion per subunit.</text>
</comment>
<comment type="pathway">
    <text evidence="1">Cofactor biosynthesis; (R)-pantothenate biosynthesis; (R)-pantoate from 3-methyl-2-oxobutanoate: step 1/2.</text>
</comment>
<comment type="subunit">
    <text evidence="1">Homodecamer; pentamer of dimers.</text>
</comment>
<comment type="subcellular location">
    <subcellularLocation>
        <location evidence="1">Cytoplasm</location>
    </subcellularLocation>
</comment>
<comment type="similarity">
    <text evidence="1">Belongs to the PanB family.</text>
</comment>
<protein>
    <recommendedName>
        <fullName evidence="1">3-methyl-2-oxobutanoate hydroxymethyltransferase</fullName>
        <ecNumber evidence="1">2.1.2.11</ecNumber>
    </recommendedName>
    <alternativeName>
        <fullName evidence="1">Ketopantoate hydroxymethyltransferase</fullName>
        <shortName evidence="1">KPHMT</shortName>
    </alternativeName>
</protein>
<keyword id="KW-0963">Cytoplasm</keyword>
<keyword id="KW-0460">Magnesium</keyword>
<keyword id="KW-0479">Metal-binding</keyword>
<keyword id="KW-0566">Pantothenate biosynthesis</keyword>
<keyword id="KW-0808">Transferase</keyword>
<proteinExistence type="inferred from homology"/>
<reference key="1">
    <citation type="journal article" date="2005" name="Nat. Biotechnol.">
        <title>Genome sequence of the chlorinated compound-respiring bacterium Dehalococcoides species strain CBDB1.</title>
        <authorList>
            <person name="Kube M."/>
            <person name="Beck A."/>
            <person name="Zinder S.H."/>
            <person name="Kuhl H."/>
            <person name="Reinhardt R."/>
            <person name="Adrian L."/>
        </authorList>
    </citation>
    <scope>NUCLEOTIDE SEQUENCE [LARGE SCALE GENOMIC DNA]</scope>
    <source>
        <strain>CBDB1</strain>
    </source>
</reference>